<dbReference type="EMBL" id="AP001306">
    <property type="protein sequence ID" value="BAB03063.1"/>
    <property type="molecule type" value="Genomic_DNA"/>
</dbReference>
<dbReference type="EMBL" id="CP002686">
    <property type="protein sequence ID" value="AEE76594.1"/>
    <property type="molecule type" value="Genomic_DNA"/>
</dbReference>
<dbReference type="EMBL" id="CP002686">
    <property type="protein sequence ID" value="ANM64477.1"/>
    <property type="molecule type" value="Genomic_DNA"/>
</dbReference>
<dbReference type="EMBL" id="AK229803">
    <property type="protein sequence ID" value="BAF01634.1"/>
    <property type="molecule type" value="mRNA"/>
</dbReference>
<dbReference type="RefSeq" id="NP_001326502.1">
    <property type="nucleotide sequence ID" value="NM_001338570.1"/>
</dbReference>
<dbReference type="RefSeq" id="NP_188854.1">
    <property type="nucleotide sequence ID" value="NM_113112.4"/>
</dbReference>
<dbReference type="SMR" id="Q9LIE7"/>
<dbReference type="FunCoup" id="Q9LIE7">
    <property type="interactions" value="853"/>
</dbReference>
<dbReference type="STRING" id="3702.Q9LIE7"/>
<dbReference type="GlyGen" id="Q9LIE7">
    <property type="glycosylation" value="1 site"/>
</dbReference>
<dbReference type="iPTMnet" id="Q9LIE7"/>
<dbReference type="PaxDb" id="3702-AT3G22150.1"/>
<dbReference type="ProteomicsDB" id="249096"/>
<dbReference type="EnsemblPlants" id="AT3G22150.1">
    <property type="protein sequence ID" value="AT3G22150.1"/>
    <property type="gene ID" value="AT3G22150"/>
</dbReference>
<dbReference type="EnsemblPlants" id="AT3G22150.2">
    <property type="protein sequence ID" value="AT3G22150.2"/>
    <property type="gene ID" value="AT3G22150"/>
</dbReference>
<dbReference type="GeneID" id="821779"/>
<dbReference type="Gramene" id="AT3G22150.1">
    <property type="protein sequence ID" value="AT3G22150.1"/>
    <property type="gene ID" value="AT3G22150"/>
</dbReference>
<dbReference type="Gramene" id="AT3G22150.2">
    <property type="protein sequence ID" value="AT3G22150.2"/>
    <property type="gene ID" value="AT3G22150"/>
</dbReference>
<dbReference type="KEGG" id="ath:AT3G22150"/>
<dbReference type="Araport" id="AT3G22150"/>
<dbReference type="TAIR" id="AT3G22150">
    <property type="gene designation" value="AEF1"/>
</dbReference>
<dbReference type="eggNOG" id="KOG4197">
    <property type="taxonomic scope" value="Eukaryota"/>
</dbReference>
<dbReference type="HOGENOM" id="CLU_002706_15_6_1"/>
<dbReference type="InParanoid" id="Q9LIE7"/>
<dbReference type="OMA" id="CCIADML"/>
<dbReference type="PhylomeDB" id="Q9LIE7"/>
<dbReference type="PRO" id="PR:Q9LIE7"/>
<dbReference type="Proteomes" id="UP000006548">
    <property type="component" value="Chromosome 3"/>
</dbReference>
<dbReference type="ExpressionAtlas" id="Q9LIE7">
    <property type="expression patterns" value="baseline and differential"/>
</dbReference>
<dbReference type="GO" id="GO:0009507">
    <property type="term" value="C:chloroplast"/>
    <property type="evidence" value="ECO:0007669"/>
    <property type="project" value="UniProtKB-SubCell"/>
</dbReference>
<dbReference type="GO" id="GO:0005739">
    <property type="term" value="C:mitochondrion"/>
    <property type="evidence" value="ECO:0007669"/>
    <property type="project" value="GOC"/>
</dbReference>
<dbReference type="GO" id="GO:0009536">
    <property type="term" value="C:plastid"/>
    <property type="evidence" value="ECO:0000314"/>
    <property type="project" value="TAIR"/>
</dbReference>
<dbReference type="GO" id="GO:0003729">
    <property type="term" value="F:mRNA binding"/>
    <property type="evidence" value="ECO:0000314"/>
    <property type="project" value="TAIR"/>
</dbReference>
<dbReference type="GO" id="GO:1900865">
    <property type="term" value="P:chloroplast RNA modification"/>
    <property type="evidence" value="ECO:0000315"/>
    <property type="project" value="TAIR"/>
</dbReference>
<dbReference type="GO" id="GO:0080156">
    <property type="term" value="P:mitochondrial mRNA modification"/>
    <property type="evidence" value="ECO:0000315"/>
    <property type="project" value="TAIR"/>
</dbReference>
<dbReference type="FunFam" id="1.25.40.10:FF:002474">
    <property type="entry name" value="Pentatricopeptide repeat-containing protein At3g22150, chloroplastic"/>
    <property type="match status" value="1"/>
</dbReference>
<dbReference type="FunFam" id="1.25.40.10:FF:000243">
    <property type="entry name" value="Pentatricopeptide repeat-containing protein chloroplastic"/>
    <property type="match status" value="1"/>
</dbReference>
<dbReference type="FunFam" id="1.25.40.10:FF:000496">
    <property type="entry name" value="Pentatricopeptide repeat-containing protein chloroplastic"/>
    <property type="match status" value="1"/>
</dbReference>
<dbReference type="FunFam" id="1.25.40.10:FF:000547">
    <property type="entry name" value="Pentatricopeptide repeat-containing protein chloroplastic"/>
    <property type="match status" value="1"/>
</dbReference>
<dbReference type="FunFam" id="1.25.40.10:FF:000645">
    <property type="entry name" value="Pentatricopeptide repeat-containing protein chloroplastic"/>
    <property type="match status" value="1"/>
</dbReference>
<dbReference type="FunFam" id="1.25.40.10:FF:000797">
    <property type="entry name" value="Pentatricopeptide repeat-containing protein chloroplastic"/>
    <property type="match status" value="1"/>
</dbReference>
<dbReference type="Gene3D" id="1.25.40.10">
    <property type="entry name" value="Tetratricopeptide repeat domain"/>
    <property type="match status" value="6"/>
</dbReference>
<dbReference type="InterPro" id="IPR046848">
    <property type="entry name" value="E_motif"/>
</dbReference>
<dbReference type="InterPro" id="IPR002885">
    <property type="entry name" value="Pentatricopeptide_rpt"/>
</dbReference>
<dbReference type="InterPro" id="IPR046960">
    <property type="entry name" value="PPR_At4g14850-like_plant"/>
</dbReference>
<dbReference type="InterPro" id="IPR011990">
    <property type="entry name" value="TPR-like_helical_dom_sf"/>
</dbReference>
<dbReference type="NCBIfam" id="TIGR00756">
    <property type="entry name" value="PPR"/>
    <property type="match status" value="4"/>
</dbReference>
<dbReference type="PANTHER" id="PTHR47926">
    <property type="entry name" value="PENTATRICOPEPTIDE REPEAT-CONTAINING PROTEIN"/>
    <property type="match status" value="1"/>
</dbReference>
<dbReference type="PANTHER" id="PTHR47926:SF452">
    <property type="entry name" value="PENTATRICOPEPTIDE REPEAT-CONTAINING PROTEIN"/>
    <property type="match status" value="1"/>
</dbReference>
<dbReference type="Pfam" id="PF20431">
    <property type="entry name" value="E_motif"/>
    <property type="match status" value="1"/>
</dbReference>
<dbReference type="Pfam" id="PF01535">
    <property type="entry name" value="PPR"/>
    <property type="match status" value="2"/>
</dbReference>
<dbReference type="Pfam" id="PF13041">
    <property type="entry name" value="PPR_2"/>
    <property type="match status" value="4"/>
</dbReference>
<dbReference type="PROSITE" id="PS51375">
    <property type="entry name" value="PPR"/>
    <property type="match status" value="13"/>
</dbReference>
<feature type="transit peptide" description="Chloroplast" evidence="1">
    <location>
        <begin position="1"/>
        <end position="50"/>
    </location>
</feature>
<feature type="chain" id="PRO_0000356105" description="Pentatricopeptide repeat-containing protein At3g22150, chloroplastic">
    <location>
        <begin position="51"/>
        <end position="820"/>
    </location>
</feature>
<feature type="repeat" description="PPR 1">
    <location>
        <begin position="69"/>
        <end position="99"/>
    </location>
</feature>
<feature type="repeat" description="PPR 2">
    <location>
        <begin position="106"/>
        <end position="136"/>
    </location>
</feature>
<feature type="repeat" description="PPR 3">
    <location>
        <begin position="141"/>
        <end position="177"/>
    </location>
</feature>
<feature type="repeat" description="PPR 4">
    <location>
        <begin position="178"/>
        <end position="212"/>
    </location>
</feature>
<feature type="repeat" description="PPR 5">
    <location>
        <begin position="213"/>
        <end position="247"/>
    </location>
</feature>
<feature type="repeat" description="PPR 6">
    <location>
        <begin position="250"/>
        <end position="284"/>
    </location>
</feature>
<feature type="repeat" description="PPR 7">
    <location>
        <begin position="285"/>
        <end position="316"/>
    </location>
</feature>
<feature type="repeat" description="PPR 8">
    <location>
        <begin position="317"/>
        <end position="347"/>
    </location>
</feature>
<feature type="repeat" description="PPR 9">
    <location>
        <begin position="352"/>
        <end position="382"/>
    </location>
</feature>
<feature type="repeat" description="PPR 10">
    <location>
        <begin position="383"/>
        <end position="417"/>
    </location>
</feature>
<feature type="repeat" description="PPR 11">
    <location>
        <begin position="418"/>
        <end position="452"/>
    </location>
</feature>
<feature type="repeat" description="PPR 12">
    <location>
        <begin position="485"/>
        <end position="519"/>
    </location>
</feature>
<feature type="repeat" description="PPR 13">
    <location>
        <begin position="520"/>
        <end position="550"/>
    </location>
</feature>
<feature type="repeat" description="PPR 14">
    <location>
        <begin position="555"/>
        <end position="585"/>
    </location>
</feature>
<feature type="repeat" description="PPR 15">
    <location>
        <begin position="586"/>
        <end position="620"/>
    </location>
</feature>
<feature type="repeat" description="PPR 16">
    <location>
        <begin position="621"/>
        <end position="651"/>
    </location>
</feature>
<feature type="repeat" description="PPR 17">
    <location>
        <begin position="657"/>
        <end position="691"/>
    </location>
</feature>
<feature type="region of interest" description="Disordered" evidence="2">
    <location>
        <begin position="1"/>
        <end position="42"/>
    </location>
</feature>
<feature type="region of interest" description="Type E motif">
    <location>
        <begin position="693"/>
        <end position="770"/>
    </location>
</feature>
<feature type="region of interest" description="Type E(+) motif">
    <location>
        <begin position="771"/>
        <end position="801"/>
    </location>
</feature>
<feature type="compositionally biased region" description="Polar residues" evidence="2">
    <location>
        <begin position="22"/>
        <end position="42"/>
    </location>
</feature>
<gene>
    <name type="primary">PCMP-E95</name>
    <name type="ordered locus">At3g22150</name>
    <name type="ORF">MKA23.11</name>
</gene>
<proteinExistence type="evidence at transcript level"/>
<protein>
    <recommendedName>
        <fullName>Pentatricopeptide repeat-containing protein At3g22150, chloroplastic</fullName>
    </recommendedName>
</protein>
<sequence length="820" mass="91850">MAGSALPLPPPPPLSLQSPSQNQTRHSSTFSPPTLTPQTPSIRSRLSKICQDGNPQLARQLFDAIPKPTTVLWNTIIIGFICNNLPHEALLFYSRMKKTAPFTNCDAYTYSSTLKACAETKNLKAGKAVHCHLIRCLQNSSRVVHNSLMNMYVSCLNAPDCFEYDVVRKVFDNMRRKNVVAWNTLISWYVKTGRNAEACRQFGIMMRMEVKPSPVSFVNVFPAVSISRSIKKANVFYGLMLKLGDEYVKDLFVVSSAISMYAELGDIESSRRVFDSCVERNIEVWNTMIGVYVQNDCLVESIELFLEAIGSKEIVSDEVTYLLAASAVSALQQVELGRQFHGFVSKNFRELPIVIVNSLMVMYSRCGSVHKSFGVFLSMRERDVVSWNTMISAFVQNGLDDEGLMLVYEMQKQGFKIDYITVTALLSAASNLRNKEIGKQTHAFLIRQGIQFEGMNSYLIDMYSKSGLIRISQKLFEGSGYAERDQATWNSMISGYTQNGHTEKTFLVFRKMLEQNIRPNAVTVASILPACSQIGSVDLGKQLHGFSIRQYLDQNVFVASALVDMYSKAGAIKYAEDMFSQTKERNSVTYTTMILGYGQHGMGERAISLFLSMQESGIKPDAITFVAVLSACSYSGLIDEGLKIFEEMREVYNIQPSSEHYCCITDMLGRVGRVNEAYEFVKGLGEEGNIAELWGSLLGSCKLHGELELAETVSERLAKFDKGKNFSGYEVLLSNMYAEEQKWKSVDKVRRGMREKGLKKEVGRSGIEIAGYVNCFVSRDQEHPHSSEIYDVIDGLAKDMRGDSFLTTLPTVTPSLELDE</sequence>
<reference key="1">
    <citation type="journal article" date="2000" name="DNA Res.">
        <title>Structural analysis of Arabidopsis thaliana chromosome 3. II. Sequence features of the 4,251,695 bp regions covered by 90 P1, TAC and BAC clones.</title>
        <authorList>
            <person name="Kaneko T."/>
            <person name="Katoh T."/>
            <person name="Sato S."/>
            <person name="Nakamura Y."/>
            <person name="Asamizu E."/>
            <person name="Tabata S."/>
        </authorList>
    </citation>
    <scope>NUCLEOTIDE SEQUENCE [LARGE SCALE GENOMIC DNA]</scope>
    <source>
        <strain>cv. Columbia</strain>
    </source>
</reference>
<reference key="2">
    <citation type="journal article" date="2017" name="Plant J.">
        <title>Araport11: a complete reannotation of the Arabidopsis thaliana reference genome.</title>
        <authorList>
            <person name="Cheng C.Y."/>
            <person name="Krishnakumar V."/>
            <person name="Chan A.P."/>
            <person name="Thibaud-Nissen F."/>
            <person name="Schobel S."/>
            <person name="Town C.D."/>
        </authorList>
    </citation>
    <scope>GENOME REANNOTATION</scope>
    <source>
        <strain>cv. Columbia</strain>
    </source>
</reference>
<reference key="3">
    <citation type="submission" date="2006-07" db="EMBL/GenBank/DDBJ databases">
        <title>Large-scale analysis of RIKEN Arabidopsis full-length (RAFL) cDNAs.</title>
        <authorList>
            <person name="Totoki Y."/>
            <person name="Seki M."/>
            <person name="Ishida J."/>
            <person name="Nakajima M."/>
            <person name="Enju A."/>
            <person name="Kamiya A."/>
            <person name="Narusaka M."/>
            <person name="Shin-i T."/>
            <person name="Nakagawa M."/>
            <person name="Sakamoto N."/>
            <person name="Oishi K."/>
            <person name="Kohara Y."/>
            <person name="Kobayashi M."/>
            <person name="Toyoda A."/>
            <person name="Sakaki Y."/>
            <person name="Sakurai T."/>
            <person name="Iida K."/>
            <person name="Akiyama K."/>
            <person name="Satou M."/>
            <person name="Toyoda T."/>
            <person name="Konagaya A."/>
            <person name="Carninci P."/>
            <person name="Kawai J."/>
            <person name="Hayashizaki Y."/>
            <person name="Shinozaki K."/>
        </authorList>
    </citation>
    <scope>NUCLEOTIDE SEQUENCE [LARGE SCALE MRNA]</scope>
    <source>
        <strain>cv. Columbia</strain>
    </source>
</reference>
<reference key="4">
    <citation type="journal article" date="2004" name="Plant Cell">
        <title>Genome-wide analysis of Arabidopsis pentatricopeptide repeat proteins reveals their essential role in organelle biogenesis.</title>
        <authorList>
            <person name="Lurin C."/>
            <person name="Andres C."/>
            <person name="Aubourg S."/>
            <person name="Bellaoui M."/>
            <person name="Bitton F."/>
            <person name="Bruyere C."/>
            <person name="Caboche M."/>
            <person name="Debast C."/>
            <person name="Gualberto J."/>
            <person name="Hoffmann B."/>
            <person name="Lecharny A."/>
            <person name="Le Ret M."/>
            <person name="Martin-Magniette M.-L."/>
            <person name="Mireau H."/>
            <person name="Peeters N."/>
            <person name="Renou J.-P."/>
            <person name="Szurek B."/>
            <person name="Taconnat L."/>
            <person name="Small I."/>
        </authorList>
    </citation>
    <scope>GENE FAMILY</scope>
</reference>
<organism>
    <name type="scientific">Arabidopsis thaliana</name>
    <name type="common">Mouse-ear cress</name>
    <dbReference type="NCBI Taxonomy" id="3702"/>
    <lineage>
        <taxon>Eukaryota</taxon>
        <taxon>Viridiplantae</taxon>
        <taxon>Streptophyta</taxon>
        <taxon>Embryophyta</taxon>
        <taxon>Tracheophyta</taxon>
        <taxon>Spermatophyta</taxon>
        <taxon>Magnoliopsida</taxon>
        <taxon>eudicotyledons</taxon>
        <taxon>Gunneridae</taxon>
        <taxon>Pentapetalae</taxon>
        <taxon>rosids</taxon>
        <taxon>malvids</taxon>
        <taxon>Brassicales</taxon>
        <taxon>Brassicaceae</taxon>
        <taxon>Camelineae</taxon>
        <taxon>Arabidopsis</taxon>
    </lineage>
</organism>
<accession>Q9LIE7</accession>
<keyword id="KW-0150">Chloroplast</keyword>
<keyword id="KW-0934">Plastid</keyword>
<keyword id="KW-1185">Reference proteome</keyword>
<keyword id="KW-0677">Repeat</keyword>
<keyword id="KW-0809">Transit peptide</keyword>
<name>PP246_ARATH</name>
<comment type="subcellular location">
    <subcellularLocation>
        <location evidence="3">Plastid</location>
        <location evidence="3">Chloroplast</location>
    </subcellularLocation>
</comment>
<comment type="similarity">
    <text evidence="3">Belongs to the PPR family. PCMP-E subfamily.</text>
</comment>
<comment type="online information" name="Pentatricopeptide repeat proteins">
    <link uri="https://ppr.plantenergy.uwa.edu.au"/>
</comment>
<evidence type="ECO:0000255" key="1"/>
<evidence type="ECO:0000256" key="2">
    <source>
        <dbReference type="SAM" id="MobiDB-lite"/>
    </source>
</evidence>
<evidence type="ECO:0000305" key="3"/>